<keyword id="KW-0963">Cytoplasm</keyword>
<keyword id="KW-0312">Gluconeogenesis</keyword>
<keyword id="KW-0324">Glycolysis</keyword>
<keyword id="KW-0413">Isomerase</keyword>
<sequence>MNWRNLDECAAYARLQAIRAPSLKTVLCGPEGIERVRRYCTDAGAGLRYHYAAKTVNEEILTALAALADEQELVAKYDALRAGAQINTGEKRKVLHHLTRLGVQGSSLASLPCEVRDMHAFYTKEYERVCAFARQVHEGGLRTSRGAPFTDVVQIGIGGSDLGPRALYLALEGWAQRHQAVKMRTHFISNVDPDDAALVLSKLPLETTLFILVSKSGTTLETLSNELFVAHVLRQAGLEPHTQFVAVTSETSPLANNPQYLASFYMDDFIGGRYSSSSVCGAVVLTLAFGPQVFGHFLSGAAEADRAAQEQDIRRNAALLDALIGVYERTILGYEHTAVLPYSQALARFPAHLQQLDMESNGKSVNRFGIPITYKTGPVIFGEPGTNGQHSFYQHLHQGTSVVPLQFIAFQHSQLGQDPIIRGSTGQQKLLANVVAQIVAFARGKEHADANKTFSGERPSSLLYAKALTPQTLGALLAHFENKIMFQGFAWNLNSFDQEGVQLGKTLAQHILAGEVEGVLRAYADLFDLAHAPTC</sequence>
<evidence type="ECO:0000255" key="1">
    <source>
        <dbReference type="HAMAP-Rule" id="MF_00473"/>
    </source>
</evidence>
<gene>
    <name evidence="1" type="primary">pgi</name>
    <name type="ordered locus">TPASS_0475</name>
</gene>
<organism>
    <name type="scientific">Treponema pallidum subsp. pallidum (strain SS14)</name>
    <dbReference type="NCBI Taxonomy" id="455434"/>
    <lineage>
        <taxon>Bacteria</taxon>
        <taxon>Pseudomonadati</taxon>
        <taxon>Spirochaetota</taxon>
        <taxon>Spirochaetia</taxon>
        <taxon>Spirochaetales</taxon>
        <taxon>Treponemataceae</taxon>
        <taxon>Treponema</taxon>
    </lineage>
</organism>
<name>G6PI_TREPS</name>
<protein>
    <recommendedName>
        <fullName evidence="1">Glucose-6-phosphate isomerase</fullName>
        <shortName evidence="1">GPI</shortName>
        <ecNumber evidence="1">5.3.1.9</ecNumber>
    </recommendedName>
    <alternativeName>
        <fullName evidence="1">Phosphoglucose isomerase</fullName>
        <shortName evidence="1">PGI</shortName>
    </alternativeName>
    <alternativeName>
        <fullName evidence="1">Phosphohexose isomerase</fullName>
        <shortName evidence="1">PHI</shortName>
    </alternativeName>
</protein>
<reference key="1">
    <citation type="journal article" date="2008" name="BMC Microbiol.">
        <title>Complete genome sequence of Treponema pallidum ssp. pallidum strain SS14 determined with oligonucleotide arrays.</title>
        <authorList>
            <person name="Matejkova P."/>
            <person name="Strouhal M."/>
            <person name="Smajs D."/>
            <person name="Norris S.J."/>
            <person name="Palzkill T."/>
            <person name="Petrosino J.F."/>
            <person name="Sodergren E."/>
            <person name="Norton J.E."/>
            <person name="Singh J."/>
            <person name="Richmond T.A."/>
            <person name="Molla M.N."/>
            <person name="Albert T.J."/>
            <person name="Weinstock G.M."/>
        </authorList>
    </citation>
    <scope>NUCLEOTIDE SEQUENCE [LARGE SCALE GENOMIC DNA]</scope>
    <source>
        <strain>SS14</strain>
    </source>
</reference>
<feature type="chain" id="PRO_1000125771" description="Glucose-6-phosphate isomerase">
    <location>
        <begin position="1"/>
        <end position="535"/>
    </location>
</feature>
<feature type="active site" description="Proton donor" evidence="1">
    <location>
        <position position="359"/>
    </location>
</feature>
<feature type="active site" evidence="1">
    <location>
        <position position="390"/>
    </location>
</feature>
<feature type="active site" evidence="1">
    <location>
        <position position="505"/>
    </location>
</feature>
<comment type="function">
    <text evidence="1">Catalyzes the reversible isomerization of glucose-6-phosphate to fructose-6-phosphate.</text>
</comment>
<comment type="catalytic activity">
    <reaction evidence="1">
        <text>alpha-D-glucose 6-phosphate = beta-D-fructose 6-phosphate</text>
        <dbReference type="Rhea" id="RHEA:11816"/>
        <dbReference type="ChEBI" id="CHEBI:57634"/>
        <dbReference type="ChEBI" id="CHEBI:58225"/>
        <dbReference type="EC" id="5.3.1.9"/>
    </reaction>
</comment>
<comment type="pathway">
    <text evidence="1">Carbohydrate biosynthesis; gluconeogenesis.</text>
</comment>
<comment type="pathway">
    <text evidence="1">Carbohydrate degradation; glycolysis; D-glyceraldehyde 3-phosphate and glycerone phosphate from D-glucose: step 2/4.</text>
</comment>
<comment type="subcellular location">
    <subcellularLocation>
        <location evidence="1">Cytoplasm</location>
    </subcellularLocation>
</comment>
<comment type="similarity">
    <text evidence="1">Belongs to the GPI family.</text>
</comment>
<dbReference type="EC" id="5.3.1.9" evidence="1"/>
<dbReference type="EMBL" id="CP000805">
    <property type="protein sequence ID" value="ACD70899.1"/>
    <property type="molecule type" value="Genomic_DNA"/>
</dbReference>
<dbReference type="RefSeq" id="WP_010881924.1">
    <property type="nucleotide sequence ID" value="NC_021508.1"/>
</dbReference>
<dbReference type="SMR" id="B2S370"/>
<dbReference type="KEGG" id="tpp:TPASS_0475"/>
<dbReference type="PATRIC" id="fig|455434.6.peg.475"/>
<dbReference type="UniPathway" id="UPA00109">
    <property type="reaction ID" value="UER00181"/>
</dbReference>
<dbReference type="UniPathway" id="UPA00138"/>
<dbReference type="Proteomes" id="UP000001202">
    <property type="component" value="Chromosome"/>
</dbReference>
<dbReference type="GO" id="GO:0005829">
    <property type="term" value="C:cytosol"/>
    <property type="evidence" value="ECO:0007669"/>
    <property type="project" value="TreeGrafter"/>
</dbReference>
<dbReference type="GO" id="GO:0097367">
    <property type="term" value="F:carbohydrate derivative binding"/>
    <property type="evidence" value="ECO:0007669"/>
    <property type="project" value="InterPro"/>
</dbReference>
<dbReference type="GO" id="GO:0004347">
    <property type="term" value="F:glucose-6-phosphate isomerase activity"/>
    <property type="evidence" value="ECO:0007669"/>
    <property type="project" value="UniProtKB-UniRule"/>
</dbReference>
<dbReference type="GO" id="GO:0048029">
    <property type="term" value="F:monosaccharide binding"/>
    <property type="evidence" value="ECO:0007669"/>
    <property type="project" value="TreeGrafter"/>
</dbReference>
<dbReference type="GO" id="GO:0006094">
    <property type="term" value="P:gluconeogenesis"/>
    <property type="evidence" value="ECO:0007669"/>
    <property type="project" value="UniProtKB-UniRule"/>
</dbReference>
<dbReference type="GO" id="GO:0051156">
    <property type="term" value="P:glucose 6-phosphate metabolic process"/>
    <property type="evidence" value="ECO:0007669"/>
    <property type="project" value="TreeGrafter"/>
</dbReference>
<dbReference type="GO" id="GO:0006096">
    <property type="term" value="P:glycolytic process"/>
    <property type="evidence" value="ECO:0007669"/>
    <property type="project" value="UniProtKB-UniRule"/>
</dbReference>
<dbReference type="CDD" id="cd05015">
    <property type="entry name" value="SIS_PGI_1"/>
    <property type="match status" value="1"/>
</dbReference>
<dbReference type="CDD" id="cd05016">
    <property type="entry name" value="SIS_PGI_2"/>
    <property type="match status" value="1"/>
</dbReference>
<dbReference type="Gene3D" id="1.10.1390.10">
    <property type="match status" value="1"/>
</dbReference>
<dbReference type="Gene3D" id="3.40.50.10490">
    <property type="entry name" value="Glucose-6-phosphate isomerase like protein, domain 1"/>
    <property type="match status" value="2"/>
</dbReference>
<dbReference type="HAMAP" id="MF_00473">
    <property type="entry name" value="G6P_isomerase"/>
    <property type="match status" value="1"/>
</dbReference>
<dbReference type="InterPro" id="IPR001672">
    <property type="entry name" value="G6P_Isomerase"/>
</dbReference>
<dbReference type="InterPro" id="IPR023096">
    <property type="entry name" value="G6P_Isomerase_C"/>
</dbReference>
<dbReference type="InterPro" id="IPR018189">
    <property type="entry name" value="Phosphoglucose_isomerase_CS"/>
</dbReference>
<dbReference type="InterPro" id="IPR046348">
    <property type="entry name" value="SIS_dom_sf"/>
</dbReference>
<dbReference type="InterPro" id="IPR035476">
    <property type="entry name" value="SIS_PGI_1"/>
</dbReference>
<dbReference type="InterPro" id="IPR035482">
    <property type="entry name" value="SIS_PGI_2"/>
</dbReference>
<dbReference type="NCBIfam" id="NF010695">
    <property type="entry name" value="PRK14095.1"/>
    <property type="match status" value="1"/>
</dbReference>
<dbReference type="PANTHER" id="PTHR11469">
    <property type="entry name" value="GLUCOSE-6-PHOSPHATE ISOMERASE"/>
    <property type="match status" value="1"/>
</dbReference>
<dbReference type="PANTHER" id="PTHR11469:SF1">
    <property type="entry name" value="GLUCOSE-6-PHOSPHATE ISOMERASE"/>
    <property type="match status" value="1"/>
</dbReference>
<dbReference type="Pfam" id="PF00342">
    <property type="entry name" value="PGI"/>
    <property type="match status" value="1"/>
</dbReference>
<dbReference type="PRINTS" id="PR00662">
    <property type="entry name" value="G6PISOMERASE"/>
</dbReference>
<dbReference type="SUPFAM" id="SSF53697">
    <property type="entry name" value="SIS domain"/>
    <property type="match status" value="1"/>
</dbReference>
<dbReference type="PROSITE" id="PS00174">
    <property type="entry name" value="P_GLUCOSE_ISOMERASE_2"/>
    <property type="match status" value="1"/>
</dbReference>
<dbReference type="PROSITE" id="PS51463">
    <property type="entry name" value="P_GLUCOSE_ISOMERASE_3"/>
    <property type="match status" value="1"/>
</dbReference>
<accession>B2S370</accession>
<proteinExistence type="inferred from homology"/>